<gene>
    <name evidence="1" type="primary">atpG</name>
    <name type="ordered locus">Lferr_2808</name>
</gene>
<keyword id="KW-0066">ATP synthesis</keyword>
<keyword id="KW-0997">Cell inner membrane</keyword>
<keyword id="KW-1003">Cell membrane</keyword>
<keyword id="KW-0139">CF(1)</keyword>
<keyword id="KW-0375">Hydrogen ion transport</keyword>
<keyword id="KW-0406">Ion transport</keyword>
<keyword id="KW-0472">Membrane</keyword>
<keyword id="KW-0813">Transport</keyword>
<proteinExistence type="inferred from homology"/>
<accession>B5ER43</accession>
<sequence length="288" mass="31995">MANAKEIRGQIKSVKNTRKITRAMEMVAASKMRRAQERMRAARPYAEKIREVLGHLAQAHPEYEHPLMQVRPVKKAGFLVVTTDRGLCGGLNVNVLRNVVQKMRELHEEGVESNLAVVGNKGLGFLRRHGAHLVAELNGLGDSPHLGDMIGPIRAMADAYAKGEVDVVYLVSSRFVNTMLQRATVEQLLPVEKPTASAEQRAELWDYIYEPEARPVLDRLMQRYVESVVYQAVIEHLACEQSARMVAMKSASDNAKRMVDDLQLAYNKARQAAITQEIAEISAGAAAV</sequence>
<evidence type="ECO:0000255" key="1">
    <source>
        <dbReference type="HAMAP-Rule" id="MF_00815"/>
    </source>
</evidence>
<reference key="1">
    <citation type="submission" date="2008-08" db="EMBL/GenBank/DDBJ databases">
        <title>Complete sequence of Acidithiobacillus ferrooxidans ATCC 53993.</title>
        <authorList>
            <person name="Lucas S."/>
            <person name="Copeland A."/>
            <person name="Lapidus A."/>
            <person name="Glavina del Rio T."/>
            <person name="Dalin E."/>
            <person name="Tice H."/>
            <person name="Bruce D."/>
            <person name="Goodwin L."/>
            <person name="Pitluck S."/>
            <person name="Sims D."/>
            <person name="Brettin T."/>
            <person name="Detter J.C."/>
            <person name="Han C."/>
            <person name="Kuske C.R."/>
            <person name="Larimer F."/>
            <person name="Land M."/>
            <person name="Hauser L."/>
            <person name="Kyrpides N."/>
            <person name="Lykidis A."/>
            <person name="Borole A.P."/>
        </authorList>
    </citation>
    <scope>NUCLEOTIDE SEQUENCE [LARGE SCALE GENOMIC DNA]</scope>
    <source>
        <strain>ATCC 53993 / BNL-5-31</strain>
    </source>
</reference>
<organism>
    <name type="scientific">Acidithiobacillus ferrooxidans (strain ATCC 53993 / BNL-5-31)</name>
    <name type="common">Leptospirillum ferrooxidans (ATCC 53993)</name>
    <dbReference type="NCBI Taxonomy" id="380394"/>
    <lineage>
        <taxon>Bacteria</taxon>
        <taxon>Pseudomonadati</taxon>
        <taxon>Pseudomonadota</taxon>
        <taxon>Acidithiobacillia</taxon>
        <taxon>Acidithiobacillales</taxon>
        <taxon>Acidithiobacillaceae</taxon>
        <taxon>Acidithiobacillus</taxon>
    </lineage>
</organism>
<feature type="chain" id="PRO_1000134099" description="ATP synthase gamma chain">
    <location>
        <begin position="1"/>
        <end position="288"/>
    </location>
</feature>
<comment type="function">
    <text evidence="1">Produces ATP from ADP in the presence of a proton gradient across the membrane. The gamma chain is believed to be important in regulating ATPase activity and the flow of protons through the CF(0) complex.</text>
</comment>
<comment type="subunit">
    <text evidence="1">F-type ATPases have 2 components, CF(1) - the catalytic core - and CF(0) - the membrane proton channel. CF(1) has five subunits: alpha(3), beta(3), gamma(1), delta(1), epsilon(1). CF(0) has three main subunits: a, b and c.</text>
</comment>
<comment type="subcellular location">
    <subcellularLocation>
        <location evidence="1">Cell inner membrane</location>
        <topology evidence="1">Peripheral membrane protein</topology>
    </subcellularLocation>
</comment>
<comment type="similarity">
    <text evidence="1">Belongs to the ATPase gamma chain family.</text>
</comment>
<name>ATPG_ACIF5</name>
<protein>
    <recommendedName>
        <fullName evidence="1">ATP synthase gamma chain</fullName>
    </recommendedName>
    <alternativeName>
        <fullName evidence="1">ATP synthase F1 sector gamma subunit</fullName>
    </alternativeName>
    <alternativeName>
        <fullName evidence="1">F-ATPase gamma subunit</fullName>
    </alternativeName>
</protein>
<dbReference type="EMBL" id="CP001132">
    <property type="protein sequence ID" value="ACH84994.1"/>
    <property type="molecule type" value="Genomic_DNA"/>
</dbReference>
<dbReference type="RefSeq" id="WP_012537656.1">
    <property type="nucleotide sequence ID" value="NC_011206.1"/>
</dbReference>
<dbReference type="SMR" id="B5ER43"/>
<dbReference type="GeneID" id="65282188"/>
<dbReference type="KEGG" id="afe:Lferr_2808"/>
<dbReference type="eggNOG" id="COG0224">
    <property type="taxonomic scope" value="Bacteria"/>
</dbReference>
<dbReference type="HOGENOM" id="CLU_050669_0_1_6"/>
<dbReference type="GO" id="GO:0005886">
    <property type="term" value="C:plasma membrane"/>
    <property type="evidence" value="ECO:0007669"/>
    <property type="project" value="UniProtKB-SubCell"/>
</dbReference>
<dbReference type="GO" id="GO:0045259">
    <property type="term" value="C:proton-transporting ATP synthase complex"/>
    <property type="evidence" value="ECO:0007669"/>
    <property type="project" value="UniProtKB-KW"/>
</dbReference>
<dbReference type="GO" id="GO:0005524">
    <property type="term" value="F:ATP binding"/>
    <property type="evidence" value="ECO:0007669"/>
    <property type="project" value="UniProtKB-UniRule"/>
</dbReference>
<dbReference type="GO" id="GO:0046933">
    <property type="term" value="F:proton-transporting ATP synthase activity, rotational mechanism"/>
    <property type="evidence" value="ECO:0007669"/>
    <property type="project" value="UniProtKB-UniRule"/>
</dbReference>
<dbReference type="GO" id="GO:0042777">
    <property type="term" value="P:proton motive force-driven plasma membrane ATP synthesis"/>
    <property type="evidence" value="ECO:0007669"/>
    <property type="project" value="UniProtKB-UniRule"/>
</dbReference>
<dbReference type="CDD" id="cd12151">
    <property type="entry name" value="F1-ATPase_gamma"/>
    <property type="match status" value="1"/>
</dbReference>
<dbReference type="FunFam" id="1.10.287.80:FF:000005">
    <property type="entry name" value="ATP synthase gamma chain"/>
    <property type="match status" value="1"/>
</dbReference>
<dbReference type="Gene3D" id="3.40.1380.10">
    <property type="match status" value="1"/>
</dbReference>
<dbReference type="Gene3D" id="1.10.287.80">
    <property type="entry name" value="ATP synthase, gamma subunit, helix hairpin domain"/>
    <property type="match status" value="1"/>
</dbReference>
<dbReference type="HAMAP" id="MF_00815">
    <property type="entry name" value="ATP_synth_gamma_bact"/>
    <property type="match status" value="1"/>
</dbReference>
<dbReference type="InterPro" id="IPR035968">
    <property type="entry name" value="ATP_synth_F1_ATPase_gsu"/>
</dbReference>
<dbReference type="InterPro" id="IPR000131">
    <property type="entry name" value="ATP_synth_F1_gsu"/>
</dbReference>
<dbReference type="InterPro" id="IPR023632">
    <property type="entry name" value="ATP_synth_F1_gsu_CS"/>
</dbReference>
<dbReference type="NCBIfam" id="TIGR01146">
    <property type="entry name" value="ATPsyn_F1gamma"/>
    <property type="match status" value="1"/>
</dbReference>
<dbReference type="NCBIfam" id="NF004144">
    <property type="entry name" value="PRK05621.1-1"/>
    <property type="match status" value="1"/>
</dbReference>
<dbReference type="PANTHER" id="PTHR11693">
    <property type="entry name" value="ATP SYNTHASE GAMMA CHAIN"/>
    <property type="match status" value="1"/>
</dbReference>
<dbReference type="PANTHER" id="PTHR11693:SF22">
    <property type="entry name" value="ATP SYNTHASE SUBUNIT GAMMA, MITOCHONDRIAL"/>
    <property type="match status" value="1"/>
</dbReference>
<dbReference type="Pfam" id="PF00231">
    <property type="entry name" value="ATP-synt"/>
    <property type="match status" value="1"/>
</dbReference>
<dbReference type="PRINTS" id="PR00126">
    <property type="entry name" value="ATPASEGAMMA"/>
</dbReference>
<dbReference type="SUPFAM" id="SSF52943">
    <property type="entry name" value="ATP synthase (F1-ATPase), gamma subunit"/>
    <property type="match status" value="1"/>
</dbReference>
<dbReference type="PROSITE" id="PS00153">
    <property type="entry name" value="ATPASE_GAMMA"/>
    <property type="match status" value="1"/>
</dbReference>